<organism>
    <name type="scientific">Lactobacillus acidophilus (strain ATCC 700396 / NCK56 / N2 / NCFM)</name>
    <dbReference type="NCBI Taxonomy" id="272621"/>
    <lineage>
        <taxon>Bacteria</taxon>
        <taxon>Bacillati</taxon>
        <taxon>Bacillota</taxon>
        <taxon>Bacilli</taxon>
        <taxon>Lactobacillales</taxon>
        <taxon>Lactobacillaceae</taxon>
        <taxon>Lactobacillus</taxon>
    </lineage>
</organism>
<keyword id="KW-0963">Cytoplasm</keyword>
<keyword id="KW-0378">Hydrolase</keyword>
<keyword id="KW-0645">Protease</keyword>
<keyword id="KW-1185">Reference proteome</keyword>
<keyword id="KW-0720">Serine protease</keyword>
<proteinExistence type="inferred from homology"/>
<evidence type="ECO:0000255" key="1">
    <source>
        <dbReference type="HAMAP-Rule" id="MF_00444"/>
    </source>
</evidence>
<comment type="function">
    <text evidence="1">Cleaves peptides in various proteins in a process that requires ATP hydrolysis. Has a chymotrypsin-like activity. Plays a major role in the degradation of misfolded proteins.</text>
</comment>
<comment type="catalytic activity">
    <reaction evidence="1">
        <text>Hydrolysis of proteins to small peptides in the presence of ATP and magnesium. alpha-casein is the usual test substrate. In the absence of ATP, only oligopeptides shorter than five residues are hydrolyzed (such as succinyl-Leu-Tyr-|-NHMec, and Leu-Tyr-Leu-|-Tyr-Trp, in which cleavage of the -Tyr-|-Leu- and -Tyr-|-Trp bonds also occurs).</text>
        <dbReference type="EC" id="3.4.21.92"/>
    </reaction>
</comment>
<comment type="subunit">
    <text evidence="1">Fourteen ClpP subunits assemble into 2 heptameric rings which stack back to back to give a disk-like structure with a central cavity, resembling the structure of eukaryotic proteasomes.</text>
</comment>
<comment type="subcellular location">
    <subcellularLocation>
        <location evidence="1">Cytoplasm</location>
    </subcellularLocation>
</comment>
<comment type="similarity">
    <text evidence="1">Belongs to the peptidase S14 family.</text>
</comment>
<feature type="chain" id="PRO_0000179571" description="ATP-dependent Clp protease proteolytic subunit">
    <location>
        <begin position="1"/>
        <end position="195"/>
    </location>
</feature>
<feature type="active site" description="Nucleophile" evidence="1">
    <location>
        <position position="97"/>
    </location>
</feature>
<feature type="active site" evidence="1">
    <location>
        <position position="122"/>
    </location>
</feature>
<sequence length="195" mass="21414">MLVPTVIEQTARGERAYDIYSRLLKDRIIMLSGEINDQMANSIIAQLLFLDAQDNTKDISLYINSPGGVITSGLAIMDTMNFIKSDVSTIAIGMAASMASILLTSGTKGKRFALPNSTVLIHQPLGGAQGQQTDIQIAANEILKSRKKINEILHETTGQPLEKIQKDTERDNYLTAEEAKEYGLIDEIMVNKKSN</sequence>
<reference key="1">
    <citation type="journal article" date="2005" name="Proc. Natl. Acad. Sci. U.S.A.">
        <title>Complete genome sequence of the probiotic lactic acid bacterium Lactobacillus acidophilus NCFM.</title>
        <authorList>
            <person name="Altermann E."/>
            <person name="Russell W.M."/>
            <person name="Azcarate-Peril M.A."/>
            <person name="Barrangou R."/>
            <person name="Buck B.L."/>
            <person name="McAuliffe O."/>
            <person name="Souther N."/>
            <person name="Dobson A."/>
            <person name="Duong T."/>
            <person name="Callanan M."/>
            <person name="Lick S."/>
            <person name="Hamrick A."/>
            <person name="Cano R."/>
            <person name="Klaenhammer T.R."/>
        </authorList>
    </citation>
    <scope>NUCLEOTIDE SEQUENCE [LARGE SCALE GENOMIC DNA]</scope>
    <source>
        <strain>ATCC 700396 / NCK56 / N2 / NCFM</strain>
    </source>
</reference>
<accession>Q5FL55</accession>
<gene>
    <name evidence="1" type="primary">clpP</name>
    <name type="ordered locus">LBA0694</name>
</gene>
<protein>
    <recommendedName>
        <fullName evidence="1">ATP-dependent Clp protease proteolytic subunit</fullName>
        <ecNumber evidence="1">3.4.21.92</ecNumber>
    </recommendedName>
    <alternativeName>
        <fullName evidence="1">Endopeptidase Clp</fullName>
    </alternativeName>
</protein>
<dbReference type="EC" id="3.4.21.92" evidence="1"/>
<dbReference type="EMBL" id="CP000033">
    <property type="protein sequence ID" value="AAV42569.1"/>
    <property type="molecule type" value="Genomic_DNA"/>
</dbReference>
<dbReference type="RefSeq" id="WP_003546597.1">
    <property type="nucleotide sequence ID" value="NC_006814.3"/>
</dbReference>
<dbReference type="RefSeq" id="YP_193600.1">
    <property type="nucleotide sequence ID" value="NC_006814.3"/>
</dbReference>
<dbReference type="SMR" id="Q5FL55"/>
<dbReference type="STRING" id="272621.LBA0694"/>
<dbReference type="MEROPS" id="S14.001"/>
<dbReference type="GeneID" id="93290179"/>
<dbReference type="KEGG" id="lac:LBA0694"/>
<dbReference type="PATRIC" id="fig|272621.13.peg.663"/>
<dbReference type="eggNOG" id="COG0740">
    <property type="taxonomic scope" value="Bacteria"/>
</dbReference>
<dbReference type="HOGENOM" id="CLU_058707_3_2_9"/>
<dbReference type="OrthoDB" id="9802800at2"/>
<dbReference type="BioCyc" id="LACI272621:G1G49-715-MONOMER"/>
<dbReference type="Proteomes" id="UP000006381">
    <property type="component" value="Chromosome"/>
</dbReference>
<dbReference type="GO" id="GO:0005737">
    <property type="term" value="C:cytoplasm"/>
    <property type="evidence" value="ECO:0007669"/>
    <property type="project" value="UniProtKB-SubCell"/>
</dbReference>
<dbReference type="GO" id="GO:0009368">
    <property type="term" value="C:endopeptidase Clp complex"/>
    <property type="evidence" value="ECO:0007669"/>
    <property type="project" value="TreeGrafter"/>
</dbReference>
<dbReference type="GO" id="GO:0004176">
    <property type="term" value="F:ATP-dependent peptidase activity"/>
    <property type="evidence" value="ECO:0007669"/>
    <property type="project" value="InterPro"/>
</dbReference>
<dbReference type="GO" id="GO:0051117">
    <property type="term" value="F:ATPase binding"/>
    <property type="evidence" value="ECO:0007669"/>
    <property type="project" value="TreeGrafter"/>
</dbReference>
<dbReference type="GO" id="GO:0004252">
    <property type="term" value="F:serine-type endopeptidase activity"/>
    <property type="evidence" value="ECO:0007669"/>
    <property type="project" value="UniProtKB-UniRule"/>
</dbReference>
<dbReference type="GO" id="GO:0006515">
    <property type="term" value="P:protein quality control for misfolded or incompletely synthesized proteins"/>
    <property type="evidence" value="ECO:0007669"/>
    <property type="project" value="TreeGrafter"/>
</dbReference>
<dbReference type="CDD" id="cd07017">
    <property type="entry name" value="S14_ClpP_2"/>
    <property type="match status" value="1"/>
</dbReference>
<dbReference type="FunFam" id="3.90.226.10:FF:000001">
    <property type="entry name" value="ATP-dependent Clp protease proteolytic subunit"/>
    <property type="match status" value="1"/>
</dbReference>
<dbReference type="Gene3D" id="3.90.226.10">
    <property type="entry name" value="2-enoyl-CoA Hydratase, Chain A, domain 1"/>
    <property type="match status" value="1"/>
</dbReference>
<dbReference type="HAMAP" id="MF_00444">
    <property type="entry name" value="ClpP"/>
    <property type="match status" value="1"/>
</dbReference>
<dbReference type="InterPro" id="IPR001907">
    <property type="entry name" value="ClpP"/>
</dbReference>
<dbReference type="InterPro" id="IPR029045">
    <property type="entry name" value="ClpP/crotonase-like_dom_sf"/>
</dbReference>
<dbReference type="InterPro" id="IPR023562">
    <property type="entry name" value="ClpP/TepA"/>
</dbReference>
<dbReference type="InterPro" id="IPR033135">
    <property type="entry name" value="ClpP_His_AS"/>
</dbReference>
<dbReference type="InterPro" id="IPR018215">
    <property type="entry name" value="ClpP_Ser_AS"/>
</dbReference>
<dbReference type="NCBIfam" id="TIGR00493">
    <property type="entry name" value="clpP"/>
    <property type="match status" value="1"/>
</dbReference>
<dbReference type="NCBIfam" id="NF001368">
    <property type="entry name" value="PRK00277.1"/>
    <property type="match status" value="1"/>
</dbReference>
<dbReference type="NCBIfam" id="NF009205">
    <property type="entry name" value="PRK12553.1"/>
    <property type="match status" value="1"/>
</dbReference>
<dbReference type="PANTHER" id="PTHR10381">
    <property type="entry name" value="ATP-DEPENDENT CLP PROTEASE PROTEOLYTIC SUBUNIT"/>
    <property type="match status" value="1"/>
</dbReference>
<dbReference type="PANTHER" id="PTHR10381:SF70">
    <property type="entry name" value="ATP-DEPENDENT CLP PROTEASE PROTEOLYTIC SUBUNIT"/>
    <property type="match status" value="1"/>
</dbReference>
<dbReference type="Pfam" id="PF00574">
    <property type="entry name" value="CLP_protease"/>
    <property type="match status" value="1"/>
</dbReference>
<dbReference type="PRINTS" id="PR00127">
    <property type="entry name" value="CLPPROTEASEP"/>
</dbReference>
<dbReference type="SUPFAM" id="SSF52096">
    <property type="entry name" value="ClpP/crotonase"/>
    <property type="match status" value="1"/>
</dbReference>
<dbReference type="PROSITE" id="PS00382">
    <property type="entry name" value="CLP_PROTEASE_HIS"/>
    <property type="match status" value="1"/>
</dbReference>
<dbReference type="PROSITE" id="PS00381">
    <property type="entry name" value="CLP_PROTEASE_SER"/>
    <property type="match status" value="1"/>
</dbReference>
<name>CLPP_LACAC</name>